<proteinExistence type="inferred from homology"/>
<organism>
    <name type="scientific">Nicotiana tabacum</name>
    <name type="common">Common tobacco</name>
    <dbReference type="NCBI Taxonomy" id="4097"/>
    <lineage>
        <taxon>Eukaryota</taxon>
        <taxon>Viridiplantae</taxon>
        <taxon>Streptophyta</taxon>
        <taxon>Embryophyta</taxon>
        <taxon>Tracheophyta</taxon>
        <taxon>Spermatophyta</taxon>
        <taxon>Magnoliopsida</taxon>
        <taxon>eudicotyledons</taxon>
        <taxon>Gunneridae</taxon>
        <taxon>Pentapetalae</taxon>
        <taxon>asterids</taxon>
        <taxon>lamiids</taxon>
        <taxon>Solanales</taxon>
        <taxon>Solanaceae</taxon>
        <taxon>Nicotianoideae</taxon>
        <taxon>Nicotianeae</taxon>
        <taxon>Nicotiana</taxon>
    </lineage>
</organism>
<reference key="1">
    <citation type="journal article" date="2002" name="Plant J.">
        <title>Six active phage-type RNA polymerase genes in Nicotiana tabacum.</title>
        <authorList>
            <person name="Hedtke B."/>
            <person name="Legen J."/>
            <person name="Weihe A."/>
            <person name="Herrmann R.G."/>
            <person name="Boerner T."/>
        </authorList>
    </citation>
    <scope>NUCLEOTIDE SEQUENCE [GENOMIC DNA]</scope>
</reference>
<dbReference type="EC" id="2.7.7.6"/>
<dbReference type="EMBL" id="AJ416572">
    <property type="protein sequence ID" value="CAC95023.1"/>
    <property type="status" value="ALT_SEQ"/>
    <property type="molecule type" value="Genomic_DNA"/>
</dbReference>
<dbReference type="SMR" id="Q8L6J4"/>
<dbReference type="STRING" id="4097.Q8L6J4"/>
<dbReference type="PaxDb" id="4097-Q8L6J4"/>
<dbReference type="Proteomes" id="UP000084051">
    <property type="component" value="Unplaced"/>
</dbReference>
<dbReference type="GO" id="GO:0000428">
    <property type="term" value="C:DNA-directed RNA polymerase complex"/>
    <property type="evidence" value="ECO:0007669"/>
    <property type="project" value="UniProtKB-KW"/>
</dbReference>
<dbReference type="GO" id="GO:0005739">
    <property type="term" value="C:mitochondrion"/>
    <property type="evidence" value="ECO:0007669"/>
    <property type="project" value="GOC"/>
</dbReference>
<dbReference type="GO" id="GO:0009536">
    <property type="term" value="C:plastid"/>
    <property type="evidence" value="ECO:0007669"/>
    <property type="project" value="GOC"/>
</dbReference>
<dbReference type="GO" id="GO:0003677">
    <property type="term" value="F:DNA binding"/>
    <property type="evidence" value="ECO:0007669"/>
    <property type="project" value="InterPro"/>
</dbReference>
<dbReference type="GO" id="GO:0003899">
    <property type="term" value="F:DNA-directed RNA polymerase activity"/>
    <property type="evidence" value="ECO:0007669"/>
    <property type="project" value="UniProtKB-EC"/>
</dbReference>
<dbReference type="GO" id="GO:0006351">
    <property type="term" value="P:DNA-templated transcription"/>
    <property type="evidence" value="ECO:0007669"/>
    <property type="project" value="InterPro"/>
</dbReference>
<dbReference type="Gene3D" id="3.30.70.370">
    <property type="match status" value="1"/>
</dbReference>
<dbReference type="InterPro" id="IPR046950">
    <property type="entry name" value="DNA-dir_Rpol_C_phage-type"/>
</dbReference>
<dbReference type="InterPro" id="IPR002092">
    <property type="entry name" value="DNA-dir_Rpol_phage-type"/>
</dbReference>
<dbReference type="InterPro" id="IPR043502">
    <property type="entry name" value="DNA/RNA_pol_sf"/>
</dbReference>
<dbReference type="PANTHER" id="PTHR10102:SF27">
    <property type="entry name" value="DNA-DIRECTED RNA POLYMERASE 1B, MITOCHONDRIAL"/>
    <property type="match status" value="1"/>
</dbReference>
<dbReference type="PANTHER" id="PTHR10102">
    <property type="entry name" value="DNA-DIRECTED RNA POLYMERASE, MITOCHONDRIAL"/>
    <property type="match status" value="1"/>
</dbReference>
<dbReference type="Pfam" id="PF00940">
    <property type="entry name" value="RNA_pol"/>
    <property type="match status" value="2"/>
</dbReference>
<dbReference type="SUPFAM" id="SSF56672">
    <property type="entry name" value="DNA/RNA polymerases"/>
    <property type="match status" value="1"/>
</dbReference>
<feature type="chain" id="PRO_0000087751" description="DNA-directed RNA polymerase 1A">
    <location>
        <begin position="1" status="less than"/>
        <end position="155"/>
    </location>
</feature>
<feature type="active site" evidence="1">
    <location>
        <position position="88"/>
    </location>
</feature>
<feature type="non-terminal residue">
    <location>
        <position position="1"/>
    </location>
</feature>
<sequence length="155" mass="17959">IIAMENHPVRWTTPLGLPVVQPYRKLGRHLIKTSLQILTLQRETDKVMVKRQRTAFPPNFVHSLDGSHMMMTAIACKESGLSFAGVHDSYWTHASDVDQMNKILREKFVELYDAPILENLLESFQQSFPDLQFPPLPERGDFDLREVLESPYFFN</sequence>
<evidence type="ECO:0000250" key="1"/>
<evidence type="ECO:0000305" key="2"/>
<protein>
    <recommendedName>
        <fullName>DNA-directed RNA polymerase 1A</fullName>
        <ecNumber>2.7.7.6</ecNumber>
    </recommendedName>
    <alternativeName>
        <fullName>NictaRpoT1-syl</fullName>
    </alternativeName>
    <alternativeName>
        <fullName>T7 bacteriophage-type single subunit RNA polymerase 1A</fullName>
    </alternativeName>
</protein>
<keyword id="KW-0240">DNA-directed RNA polymerase</keyword>
<keyword id="KW-0548">Nucleotidyltransferase</keyword>
<keyword id="KW-1185">Reference proteome</keyword>
<keyword id="KW-0804">Transcription</keyword>
<keyword id="KW-0808">Transferase</keyword>
<name>RPO1A_TOBAC</name>
<comment type="function">
    <text>DNA-dependent RNA polymerase catalyzes the transcription of DNA into RNA using the four ribonucleoside triphosphates as substrates.</text>
</comment>
<comment type="catalytic activity">
    <reaction>
        <text>RNA(n) + a ribonucleoside 5'-triphosphate = RNA(n+1) + diphosphate</text>
        <dbReference type="Rhea" id="RHEA:21248"/>
        <dbReference type="Rhea" id="RHEA-COMP:14527"/>
        <dbReference type="Rhea" id="RHEA-COMP:17342"/>
        <dbReference type="ChEBI" id="CHEBI:33019"/>
        <dbReference type="ChEBI" id="CHEBI:61557"/>
        <dbReference type="ChEBI" id="CHEBI:140395"/>
        <dbReference type="EC" id="2.7.7.6"/>
    </reaction>
</comment>
<comment type="similarity">
    <text evidence="2">Belongs to the phage and mitochondrial RNA polymerase family.</text>
</comment>
<comment type="sequence caution" evidence="2">
    <conflict type="erroneous gene model prediction">
        <sequence resource="EMBL-CDS" id="CAC95023"/>
    </conflict>
</comment>
<gene>
    <name type="primary">RPOT1-SYL</name>
</gene>
<accession>Q8L6J4</accession>